<protein>
    <recommendedName>
        <fullName evidence="1">Ribosomal RNA large subunit methyltransferase E</fullName>
        <ecNumber evidence="1">2.1.1.166</ecNumber>
    </recommendedName>
    <alternativeName>
        <fullName evidence="1">23S rRNA Um2552 methyltransferase</fullName>
    </alternativeName>
    <alternativeName>
        <fullName evidence="1">rRNA (uridine-2'-O-)-methyltransferase</fullName>
    </alternativeName>
</protein>
<dbReference type="EC" id="2.1.1.166" evidence="1"/>
<dbReference type="EMBL" id="CP000058">
    <property type="protein sequence ID" value="AAZ34566.1"/>
    <property type="molecule type" value="Genomic_DNA"/>
</dbReference>
<dbReference type="RefSeq" id="WP_004666214.1">
    <property type="nucleotide sequence ID" value="NC_005773.3"/>
</dbReference>
<dbReference type="SMR" id="Q48E69"/>
<dbReference type="GeneID" id="96220670"/>
<dbReference type="KEGG" id="psp:PSPPH_4199"/>
<dbReference type="eggNOG" id="COG0293">
    <property type="taxonomic scope" value="Bacteria"/>
</dbReference>
<dbReference type="HOGENOM" id="CLU_009422_4_0_6"/>
<dbReference type="Proteomes" id="UP000000551">
    <property type="component" value="Chromosome"/>
</dbReference>
<dbReference type="GO" id="GO:0005737">
    <property type="term" value="C:cytoplasm"/>
    <property type="evidence" value="ECO:0007669"/>
    <property type="project" value="UniProtKB-SubCell"/>
</dbReference>
<dbReference type="GO" id="GO:0008650">
    <property type="term" value="F:rRNA (uridine-2'-O-)-methyltransferase activity"/>
    <property type="evidence" value="ECO:0007669"/>
    <property type="project" value="UniProtKB-UniRule"/>
</dbReference>
<dbReference type="FunFam" id="3.40.50.150:FF:000005">
    <property type="entry name" value="Ribosomal RNA large subunit methyltransferase E"/>
    <property type="match status" value="1"/>
</dbReference>
<dbReference type="Gene3D" id="3.40.50.150">
    <property type="entry name" value="Vaccinia Virus protein VP39"/>
    <property type="match status" value="1"/>
</dbReference>
<dbReference type="HAMAP" id="MF_01547">
    <property type="entry name" value="RNA_methyltr_E"/>
    <property type="match status" value="1"/>
</dbReference>
<dbReference type="InterPro" id="IPR050082">
    <property type="entry name" value="RNA_methyltr_RlmE"/>
</dbReference>
<dbReference type="InterPro" id="IPR002877">
    <property type="entry name" value="RNA_MeTrfase_FtsJ_dom"/>
</dbReference>
<dbReference type="InterPro" id="IPR015507">
    <property type="entry name" value="rRNA-MeTfrase_E"/>
</dbReference>
<dbReference type="InterPro" id="IPR029063">
    <property type="entry name" value="SAM-dependent_MTases_sf"/>
</dbReference>
<dbReference type="NCBIfam" id="NF008390">
    <property type="entry name" value="PRK11188.1"/>
    <property type="match status" value="1"/>
</dbReference>
<dbReference type="PANTHER" id="PTHR10920">
    <property type="entry name" value="RIBOSOMAL RNA METHYLTRANSFERASE"/>
    <property type="match status" value="1"/>
</dbReference>
<dbReference type="PANTHER" id="PTHR10920:SF18">
    <property type="entry name" value="RRNA METHYLTRANSFERASE 2, MITOCHONDRIAL"/>
    <property type="match status" value="1"/>
</dbReference>
<dbReference type="Pfam" id="PF01728">
    <property type="entry name" value="FtsJ"/>
    <property type="match status" value="1"/>
</dbReference>
<dbReference type="PIRSF" id="PIRSF005461">
    <property type="entry name" value="23S_rRNA_mtase"/>
    <property type="match status" value="1"/>
</dbReference>
<dbReference type="SUPFAM" id="SSF53335">
    <property type="entry name" value="S-adenosyl-L-methionine-dependent methyltransferases"/>
    <property type="match status" value="1"/>
</dbReference>
<feature type="chain" id="PRO_0000155523" description="Ribosomal RNA large subunit methyltransferase E">
    <location>
        <begin position="1"/>
        <end position="216"/>
    </location>
</feature>
<feature type="active site" description="Proton acceptor" evidence="1">
    <location>
        <position position="161"/>
    </location>
</feature>
<feature type="binding site" evidence="1">
    <location>
        <position position="60"/>
    </location>
    <ligand>
        <name>S-adenosyl-L-methionine</name>
        <dbReference type="ChEBI" id="CHEBI:59789"/>
    </ligand>
</feature>
<feature type="binding site" evidence="1">
    <location>
        <position position="62"/>
    </location>
    <ligand>
        <name>S-adenosyl-L-methionine</name>
        <dbReference type="ChEBI" id="CHEBI:59789"/>
    </ligand>
</feature>
<feature type="binding site" evidence="1">
    <location>
        <position position="80"/>
    </location>
    <ligand>
        <name>S-adenosyl-L-methionine</name>
        <dbReference type="ChEBI" id="CHEBI:59789"/>
    </ligand>
</feature>
<feature type="binding site" evidence="1">
    <location>
        <position position="96"/>
    </location>
    <ligand>
        <name>S-adenosyl-L-methionine</name>
        <dbReference type="ChEBI" id="CHEBI:59789"/>
    </ligand>
</feature>
<feature type="binding site" evidence="1">
    <location>
        <position position="121"/>
    </location>
    <ligand>
        <name>S-adenosyl-L-methionine</name>
        <dbReference type="ChEBI" id="CHEBI:59789"/>
    </ligand>
</feature>
<proteinExistence type="inferred from homology"/>
<gene>
    <name evidence="1" type="primary">rlmE</name>
    <name evidence="1" type="synonym">ftsJ</name>
    <name evidence="1" type="synonym">rrmJ</name>
    <name type="ordered locus">PSPPH_4199</name>
</gene>
<comment type="function">
    <text evidence="1">Specifically methylates the uridine in position 2552 of 23S rRNA at the 2'-O position of the ribose in the fully assembled 50S ribosomal subunit.</text>
</comment>
<comment type="catalytic activity">
    <reaction evidence="1">
        <text>uridine(2552) in 23S rRNA + S-adenosyl-L-methionine = 2'-O-methyluridine(2552) in 23S rRNA + S-adenosyl-L-homocysteine + H(+)</text>
        <dbReference type="Rhea" id="RHEA:42720"/>
        <dbReference type="Rhea" id="RHEA-COMP:10202"/>
        <dbReference type="Rhea" id="RHEA-COMP:10203"/>
        <dbReference type="ChEBI" id="CHEBI:15378"/>
        <dbReference type="ChEBI" id="CHEBI:57856"/>
        <dbReference type="ChEBI" id="CHEBI:59789"/>
        <dbReference type="ChEBI" id="CHEBI:65315"/>
        <dbReference type="ChEBI" id="CHEBI:74478"/>
        <dbReference type="EC" id="2.1.1.166"/>
    </reaction>
</comment>
<comment type="subcellular location">
    <subcellularLocation>
        <location evidence="1">Cytoplasm</location>
    </subcellularLocation>
</comment>
<comment type="similarity">
    <text evidence="1">Belongs to the class I-like SAM-binding methyltransferase superfamily. RNA methyltransferase RlmE family.</text>
</comment>
<sequence length="216" mass="24262">MARSKTSHNWLKEHFDDKYVKMAQKDGYRSRASYKLLEIQEKDKLIRPGMTVIDLGAAPGGWSQVTSRLIGGQGRLIASDILEMDSIPDVTFIQGDFTEDKILEQILEAVGNTQVDLVISDMAPNMSGLSAVDMPRAMFLCELALDLAGRVLRPGGDFLIKVFQGEGFDVYHKDIRKLFDKVQMRKPSSSRDRSREQYLLARGFRGIDGAASIERF</sequence>
<reference key="1">
    <citation type="journal article" date="2005" name="J. Bacteriol.">
        <title>Whole-genome sequence analysis of Pseudomonas syringae pv. phaseolicola 1448A reveals divergence among pathovars in genes involved in virulence and transposition.</title>
        <authorList>
            <person name="Joardar V."/>
            <person name="Lindeberg M."/>
            <person name="Jackson R.W."/>
            <person name="Selengut J."/>
            <person name="Dodson R."/>
            <person name="Brinkac L.M."/>
            <person name="Daugherty S.C."/>
            <person name="DeBoy R.T."/>
            <person name="Durkin A.S."/>
            <person name="Gwinn Giglio M."/>
            <person name="Madupu R."/>
            <person name="Nelson W.C."/>
            <person name="Rosovitz M.J."/>
            <person name="Sullivan S.A."/>
            <person name="Crabtree J."/>
            <person name="Creasy T."/>
            <person name="Davidsen T.M."/>
            <person name="Haft D.H."/>
            <person name="Zafar N."/>
            <person name="Zhou L."/>
            <person name="Halpin R."/>
            <person name="Holley T."/>
            <person name="Khouri H.M."/>
            <person name="Feldblyum T.V."/>
            <person name="White O."/>
            <person name="Fraser C.M."/>
            <person name="Chatterjee A.K."/>
            <person name="Cartinhour S."/>
            <person name="Schneider D."/>
            <person name="Mansfield J.W."/>
            <person name="Collmer A."/>
            <person name="Buell R."/>
        </authorList>
    </citation>
    <scope>NUCLEOTIDE SEQUENCE [LARGE SCALE GENOMIC DNA]</scope>
    <source>
        <strain>1448A / Race 6</strain>
    </source>
</reference>
<name>RLME_PSE14</name>
<keyword id="KW-0963">Cytoplasm</keyword>
<keyword id="KW-0489">Methyltransferase</keyword>
<keyword id="KW-0698">rRNA processing</keyword>
<keyword id="KW-0949">S-adenosyl-L-methionine</keyword>
<keyword id="KW-0808">Transferase</keyword>
<organism>
    <name type="scientific">Pseudomonas savastanoi pv. phaseolicola (strain 1448A / Race 6)</name>
    <name type="common">Pseudomonas syringae pv. phaseolicola (strain 1448A / Race 6)</name>
    <dbReference type="NCBI Taxonomy" id="264730"/>
    <lineage>
        <taxon>Bacteria</taxon>
        <taxon>Pseudomonadati</taxon>
        <taxon>Pseudomonadota</taxon>
        <taxon>Gammaproteobacteria</taxon>
        <taxon>Pseudomonadales</taxon>
        <taxon>Pseudomonadaceae</taxon>
        <taxon>Pseudomonas</taxon>
    </lineage>
</organism>
<evidence type="ECO:0000255" key="1">
    <source>
        <dbReference type="HAMAP-Rule" id="MF_01547"/>
    </source>
</evidence>
<accession>Q48E69</accession>